<name>YTH3_RHOER</name>
<accession>P46372</accession>
<dbReference type="EMBL" id="U17129">
    <property type="protein sequence ID" value="AAC77471.1"/>
    <property type="molecule type" value="Genomic_DNA"/>
</dbReference>
<dbReference type="RefSeq" id="WP_222671473.1">
    <property type="nucleotide sequence ID" value="NZ_JABBPH010000001.1"/>
</dbReference>
<dbReference type="SMR" id="P46372"/>
<dbReference type="STRING" id="1833.XU06_08915"/>
<dbReference type="GO" id="GO:0003677">
    <property type="term" value="F:DNA binding"/>
    <property type="evidence" value="ECO:0007669"/>
    <property type="project" value="UniProtKB-KW"/>
</dbReference>
<dbReference type="Gene3D" id="3.30.450.40">
    <property type="match status" value="1"/>
</dbReference>
<dbReference type="InterPro" id="IPR029016">
    <property type="entry name" value="GAF-like_dom_sf"/>
</dbReference>
<sequence length="437" mass="47300">MAREQAVSGNPWVAVRPGDDVALLARRLSSAHQSFIDARGVPGQGLTDDSHVRSVVLESWMRSRNKGVNPDVVGNPEMLEGLELEKYRSAHPMSLIRPVIRKLLVEDAAETGLLIAISDAHGRLLWVEGDNSAKDKALSMNFVEGADWSEDRVGTNAPGTALALDHAVQIFGSEHFNRTVHDWSCSAAPVHDPTTGQILGAIDITGGPRVAVPEVLSLIRATVAAAESELRFHLLNSPIPLSATAPRLETFGAGRPTLVRGGDRIPISQRHAEILLLLSEHPEGLSSDHLAVLLDEGELDAVTIRAEMSRLRKVFGADRLASRPYRIITEFTTDVGDVRAALDRGDAATAMKLYSGPVLAGSASPGIEEVREELRTRVQAALLRGGDANLLARWTTSVHGREDSVVWEAYLSTLDPQSPLYSQVQARIDLLDRQLGI</sequence>
<feature type="chain" id="PRO_0000066524" description="Uncharacterized 47.3 kDa protein in thcA 5'region">
    <location>
        <begin position="1"/>
        <end position="437"/>
    </location>
</feature>
<reference key="1">
    <citation type="journal article" date="1995" name="J. Bacteriol.">
        <title>Degradation of the thiocarbamate herbicide EPTC (S-ethyl dipropylcarbamothioate) and biosafening by Rhodococcus sp. strain NI86/21 involve an inducible cytochrome P-450 system and aldehyde dehydrogenase.</title>
        <authorList>
            <person name="Nagy I."/>
            <person name="Schoofs G."/>
            <person name="Compernolle F."/>
            <person name="Proost P."/>
            <person name="Vanderleyden J."/>
            <person name="de Mot R."/>
        </authorList>
    </citation>
    <scope>NUCLEOTIDE SEQUENCE [GENOMIC DNA]</scope>
    <source>
        <strain>NI86/21</strain>
    </source>
</reference>
<keyword id="KW-0238">DNA-binding</keyword>
<keyword id="KW-0804">Transcription</keyword>
<keyword id="KW-0805">Transcription regulation</keyword>
<organism>
    <name type="scientific">Rhodococcus erythropolis</name>
    <name type="common">Arthrobacter picolinophilus</name>
    <dbReference type="NCBI Taxonomy" id="1833"/>
    <lineage>
        <taxon>Bacteria</taxon>
        <taxon>Bacillati</taxon>
        <taxon>Actinomycetota</taxon>
        <taxon>Actinomycetes</taxon>
        <taxon>Mycobacteriales</taxon>
        <taxon>Nocardiaceae</taxon>
        <taxon>Rhodococcus</taxon>
        <taxon>Rhodococcus erythropolis group</taxon>
    </lineage>
</organism>
<protein>
    <recommendedName>
        <fullName>Uncharacterized 47.3 kDa protein in thcA 5'region</fullName>
    </recommendedName>
    <alternativeName>
        <fullName>ORF3</fullName>
    </alternativeName>
</protein>
<proteinExistence type="predicted"/>